<organism>
    <name type="scientific">Calycanthus floridus var. glaucus</name>
    <name type="common">Eastern sweetshrub</name>
    <name type="synonym">Calycanthus fertilis var. ferax</name>
    <dbReference type="NCBI Taxonomy" id="212734"/>
    <lineage>
        <taxon>Eukaryota</taxon>
        <taxon>Viridiplantae</taxon>
        <taxon>Streptophyta</taxon>
        <taxon>Embryophyta</taxon>
        <taxon>Tracheophyta</taxon>
        <taxon>Spermatophyta</taxon>
        <taxon>Magnoliopsida</taxon>
        <taxon>Magnoliidae</taxon>
        <taxon>Laurales</taxon>
        <taxon>Calycanthaceae</taxon>
        <taxon>Calycanthus</taxon>
    </lineage>
</organism>
<comment type="function">
    <text evidence="1">Produces ATP from ADP in the presence of a proton gradient across the membrane. The catalytic sites are hosted primarily by the beta subunits.</text>
</comment>
<comment type="catalytic activity">
    <reaction evidence="1">
        <text>ATP + H2O + 4 H(+)(in) = ADP + phosphate + 5 H(+)(out)</text>
        <dbReference type="Rhea" id="RHEA:57720"/>
        <dbReference type="ChEBI" id="CHEBI:15377"/>
        <dbReference type="ChEBI" id="CHEBI:15378"/>
        <dbReference type="ChEBI" id="CHEBI:30616"/>
        <dbReference type="ChEBI" id="CHEBI:43474"/>
        <dbReference type="ChEBI" id="CHEBI:456216"/>
        <dbReference type="EC" id="7.1.2.2"/>
    </reaction>
</comment>
<comment type="subunit">
    <text evidence="1">F-type ATPases have 2 components, CF(1) - the catalytic core - and CF(0) - the membrane proton channel. CF(1) has five subunits: alpha(3), beta(3), gamma(1), delta(1), epsilon(1). CF(0) has four main subunits: a(1), b(1), b'(1) and c(9-12).</text>
</comment>
<comment type="subcellular location">
    <subcellularLocation>
        <location evidence="1">Plastid</location>
        <location evidence="1">Chloroplast thylakoid membrane</location>
        <topology evidence="1">Peripheral membrane protein</topology>
    </subcellularLocation>
</comment>
<comment type="similarity">
    <text evidence="1">Belongs to the ATPase alpha/beta chains family.</text>
</comment>
<sequence>MRINPTTSGPGVSTLEEKNLGRIAQIIGPVLDVAFPPGKMPNIYNALVVKGRDTVGQQINVTCEVQQLLGNNRVRAVAMSATDGLMRGMEVIDTGAPLSVPVGGATLGRIFNVLGEPVDNLGPVDTRTTSPIHRSAPAFIQLDTKLSIFETGIKVVDLLAPYRRGGKIGLFGGAGVGKTVLIMELINNIAKAHGGVSVFGGVGERTREGNDLYMEMKESGVINEQNIAESKVALVHGQMNEPPGARMRVGLTALTMAEYFRDVNEQDVLLFIDNIFRFVQAGSEVSALLGRMPSAVGYQPTLSTEMGSLQERITSTKEGSITSIQAVYVPADDLTDPAPATTFAHLDATTVLSRGLAAKGIYPAVDPLDSTSTMLQPRIVGEEHYEIAQRVKQTSQRYKELQDIIAILGLDELSEEDRLTVARARKIERFLSQPFFVAEVFTGSPGKYVGLAETIRGFQLILSGELDGLPEQAFYLVGNIDEATAKAMNLEVESKLKK</sequence>
<gene>
    <name evidence="1" type="primary">atpB</name>
</gene>
<accession>Q7YJW5</accession>
<reference key="1">
    <citation type="journal article" date="2003" name="Plant Syst. Evol.">
        <title>The chloroplast genome of the 'basal' angiosperm Calycanthus fertilis -- structural and phylogenetic analyses.</title>
        <authorList>
            <person name="Goremykin V."/>
            <person name="Hirsch-Ernst K.I."/>
            <person name="Woelfl S."/>
            <person name="Hellwig F.H."/>
        </authorList>
    </citation>
    <scope>NUCLEOTIDE SEQUENCE [LARGE SCALE GENOMIC DNA]</scope>
</reference>
<name>ATPB_CALFG</name>
<feature type="chain" id="PRO_0000254451" description="ATP synthase subunit beta, chloroplastic">
    <location>
        <begin position="1"/>
        <end position="498"/>
    </location>
</feature>
<feature type="binding site" evidence="1">
    <location>
        <begin position="172"/>
        <end position="179"/>
    </location>
    <ligand>
        <name>ATP</name>
        <dbReference type="ChEBI" id="CHEBI:30616"/>
    </ligand>
</feature>
<dbReference type="EC" id="7.1.2.2" evidence="1"/>
<dbReference type="EMBL" id="AJ428413">
    <property type="protein sequence ID" value="CAD28728.1"/>
    <property type="molecule type" value="Genomic_DNA"/>
</dbReference>
<dbReference type="RefSeq" id="NP_862761.1">
    <property type="nucleotide sequence ID" value="NC_004993.1"/>
</dbReference>
<dbReference type="SMR" id="Q7YJW5"/>
<dbReference type="GeneID" id="2597975"/>
<dbReference type="GO" id="GO:0009535">
    <property type="term" value="C:chloroplast thylakoid membrane"/>
    <property type="evidence" value="ECO:0007669"/>
    <property type="project" value="UniProtKB-SubCell"/>
</dbReference>
<dbReference type="GO" id="GO:0005739">
    <property type="term" value="C:mitochondrion"/>
    <property type="evidence" value="ECO:0007669"/>
    <property type="project" value="GOC"/>
</dbReference>
<dbReference type="GO" id="GO:0045259">
    <property type="term" value="C:proton-transporting ATP synthase complex"/>
    <property type="evidence" value="ECO:0007669"/>
    <property type="project" value="UniProtKB-KW"/>
</dbReference>
<dbReference type="GO" id="GO:0005524">
    <property type="term" value="F:ATP binding"/>
    <property type="evidence" value="ECO:0007669"/>
    <property type="project" value="UniProtKB-UniRule"/>
</dbReference>
<dbReference type="GO" id="GO:0016887">
    <property type="term" value="F:ATP hydrolysis activity"/>
    <property type="evidence" value="ECO:0007669"/>
    <property type="project" value="InterPro"/>
</dbReference>
<dbReference type="GO" id="GO:0046933">
    <property type="term" value="F:proton-transporting ATP synthase activity, rotational mechanism"/>
    <property type="evidence" value="ECO:0007669"/>
    <property type="project" value="UniProtKB-UniRule"/>
</dbReference>
<dbReference type="GO" id="GO:0042776">
    <property type="term" value="P:proton motive force-driven mitochondrial ATP synthesis"/>
    <property type="evidence" value="ECO:0007669"/>
    <property type="project" value="TreeGrafter"/>
</dbReference>
<dbReference type="CDD" id="cd18110">
    <property type="entry name" value="ATP-synt_F1_beta_C"/>
    <property type="match status" value="1"/>
</dbReference>
<dbReference type="CDD" id="cd18115">
    <property type="entry name" value="ATP-synt_F1_beta_N"/>
    <property type="match status" value="1"/>
</dbReference>
<dbReference type="CDD" id="cd01133">
    <property type="entry name" value="F1-ATPase_beta_CD"/>
    <property type="match status" value="1"/>
</dbReference>
<dbReference type="FunFam" id="1.10.1140.10:FF:000001">
    <property type="entry name" value="ATP synthase subunit beta"/>
    <property type="match status" value="1"/>
</dbReference>
<dbReference type="FunFam" id="3.40.50.300:FF:000004">
    <property type="entry name" value="ATP synthase subunit beta"/>
    <property type="match status" value="1"/>
</dbReference>
<dbReference type="FunFam" id="2.40.10.170:FF:000002">
    <property type="entry name" value="ATP synthase subunit beta, chloroplastic"/>
    <property type="match status" value="1"/>
</dbReference>
<dbReference type="Gene3D" id="2.40.10.170">
    <property type="match status" value="1"/>
</dbReference>
<dbReference type="Gene3D" id="1.10.1140.10">
    <property type="entry name" value="Bovine Mitochondrial F1-atpase, Atp Synthase Beta Chain, Chain D, domain 3"/>
    <property type="match status" value="1"/>
</dbReference>
<dbReference type="Gene3D" id="3.40.50.300">
    <property type="entry name" value="P-loop containing nucleotide triphosphate hydrolases"/>
    <property type="match status" value="1"/>
</dbReference>
<dbReference type="HAMAP" id="MF_01347">
    <property type="entry name" value="ATP_synth_beta_bact"/>
    <property type="match status" value="1"/>
</dbReference>
<dbReference type="InterPro" id="IPR003593">
    <property type="entry name" value="AAA+_ATPase"/>
</dbReference>
<dbReference type="InterPro" id="IPR055190">
    <property type="entry name" value="ATP-synt_VA_C"/>
</dbReference>
<dbReference type="InterPro" id="IPR005722">
    <property type="entry name" value="ATP_synth_F1_bsu"/>
</dbReference>
<dbReference type="InterPro" id="IPR020003">
    <property type="entry name" value="ATPase_a/bsu_AS"/>
</dbReference>
<dbReference type="InterPro" id="IPR050053">
    <property type="entry name" value="ATPase_alpha/beta_chains"/>
</dbReference>
<dbReference type="InterPro" id="IPR004100">
    <property type="entry name" value="ATPase_F1/V1/A1_a/bsu_N"/>
</dbReference>
<dbReference type="InterPro" id="IPR036121">
    <property type="entry name" value="ATPase_F1/V1/A1_a/bsu_N_sf"/>
</dbReference>
<dbReference type="InterPro" id="IPR000194">
    <property type="entry name" value="ATPase_F1/V1/A1_a/bsu_nucl-bd"/>
</dbReference>
<dbReference type="InterPro" id="IPR024034">
    <property type="entry name" value="ATPase_F1/V1_b/a_C"/>
</dbReference>
<dbReference type="InterPro" id="IPR027417">
    <property type="entry name" value="P-loop_NTPase"/>
</dbReference>
<dbReference type="NCBIfam" id="TIGR01039">
    <property type="entry name" value="atpD"/>
    <property type="match status" value="1"/>
</dbReference>
<dbReference type="PANTHER" id="PTHR15184">
    <property type="entry name" value="ATP SYNTHASE"/>
    <property type="match status" value="1"/>
</dbReference>
<dbReference type="PANTHER" id="PTHR15184:SF71">
    <property type="entry name" value="ATP SYNTHASE SUBUNIT BETA, MITOCHONDRIAL"/>
    <property type="match status" value="1"/>
</dbReference>
<dbReference type="Pfam" id="PF00006">
    <property type="entry name" value="ATP-synt_ab"/>
    <property type="match status" value="1"/>
</dbReference>
<dbReference type="Pfam" id="PF02874">
    <property type="entry name" value="ATP-synt_ab_N"/>
    <property type="match status" value="1"/>
</dbReference>
<dbReference type="Pfam" id="PF22919">
    <property type="entry name" value="ATP-synt_VA_C"/>
    <property type="match status" value="1"/>
</dbReference>
<dbReference type="SMART" id="SM00382">
    <property type="entry name" value="AAA"/>
    <property type="match status" value="1"/>
</dbReference>
<dbReference type="SUPFAM" id="SSF47917">
    <property type="entry name" value="C-terminal domain of alpha and beta subunits of F1 ATP synthase"/>
    <property type="match status" value="1"/>
</dbReference>
<dbReference type="SUPFAM" id="SSF50615">
    <property type="entry name" value="N-terminal domain of alpha and beta subunits of F1 ATP synthase"/>
    <property type="match status" value="1"/>
</dbReference>
<dbReference type="SUPFAM" id="SSF52540">
    <property type="entry name" value="P-loop containing nucleoside triphosphate hydrolases"/>
    <property type="match status" value="1"/>
</dbReference>
<dbReference type="PROSITE" id="PS00152">
    <property type="entry name" value="ATPASE_ALPHA_BETA"/>
    <property type="match status" value="1"/>
</dbReference>
<keyword id="KW-0066">ATP synthesis</keyword>
<keyword id="KW-0067">ATP-binding</keyword>
<keyword id="KW-0139">CF(1)</keyword>
<keyword id="KW-0150">Chloroplast</keyword>
<keyword id="KW-0375">Hydrogen ion transport</keyword>
<keyword id="KW-0406">Ion transport</keyword>
<keyword id="KW-0472">Membrane</keyword>
<keyword id="KW-0547">Nucleotide-binding</keyword>
<keyword id="KW-0934">Plastid</keyword>
<keyword id="KW-0793">Thylakoid</keyword>
<keyword id="KW-1278">Translocase</keyword>
<keyword id="KW-0813">Transport</keyword>
<proteinExistence type="inferred from homology"/>
<geneLocation type="chloroplast"/>
<protein>
    <recommendedName>
        <fullName evidence="1">ATP synthase subunit beta, chloroplastic</fullName>
        <ecNumber evidence="1">7.1.2.2</ecNumber>
    </recommendedName>
    <alternativeName>
        <fullName evidence="1">ATP synthase F1 sector subunit beta</fullName>
    </alternativeName>
    <alternativeName>
        <fullName evidence="1">F-ATPase subunit beta</fullName>
    </alternativeName>
</protein>
<evidence type="ECO:0000255" key="1">
    <source>
        <dbReference type="HAMAP-Rule" id="MF_01347"/>
    </source>
</evidence>